<comment type="function">
    <text evidence="1">One of the primary rRNA binding proteins, it binds directly near the 3'-end of the 23S rRNA, where it nucleates assembly of the 50S subunit.</text>
</comment>
<comment type="subunit">
    <text evidence="1">Part of the 50S ribosomal subunit. Forms a cluster with proteins L14 and L19.</text>
</comment>
<comment type="similarity">
    <text evidence="1">Belongs to the universal ribosomal protein uL3 family.</text>
</comment>
<proteinExistence type="inferred from homology"/>
<gene>
    <name evidence="1" type="primary">rplC</name>
    <name type="ordered locus">Acid_5118</name>
</gene>
<evidence type="ECO:0000255" key="1">
    <source>
        <dbReference type="HAMAP-Rule" id="MF_01325"/>
    </source>
</evidence>
<evidence type="ECO:0000305" key="2"/>
<reference key="1">
    <citation type="journal article" date="2009" name="Appl. Environ. Microbiol.">
        <title>Three genomes from the phylum Acidobacteria provide insight into the lifestyles of these microorganisms in soils.</title>
        <authorList>
            <person name="Ward N.L."/>
            <person name="Challacombe J.F."/>
            <person name="Janssen P.H."/>
            <person name="Henrissat B."/>
            <person name="Coutinho P.M."/>
            <person name="Wu M."/>
            <person name="Xie G."/>
            <person name="Haft D.H."/>
            <person name="Sait M."/>
            <person name="Badger J."/>
            <person name="Barabote R.D."/>
            <person name="Bradley B."/>
            <person name="Brettin T.S."/>
            <person name="Brinkac L.M."/>
            <person name="Bruce D."/>
            <person name="Creasy T."/>
            <person name="Daugherty S.C."/>
            <person name="Davidsen T.M."/>
            <person name="DeBoy R.T."/>
            <person name="Detter J.C."/>
            <person name="Dodson R.J."/>
            <person name="Durkin A.S."/>
            <person name="Ganapathy A."/>
            <person name="Gwinn-Giglio M."/>
            <person name="Han C.S."/>
            <person name="Khouri H."/>
            <person name="Kiss H."/>
            <person name="Kothari S.P."/>
            <person name="Madupu R."/>
            <person name="Nelson K.E."/>
            <person name="Nelson W.C."/>
            <person name="Paulsen I."/>
            <person name="Penn K."/>
            <person name="Ren Q."/>
            <person name="Rosovitz M.J."/>
            <person name="Selengut J.D."/>
            <person name="Shrivastava S."/>
            <person name="Sullivan S.A."/>
            <person name="Tapia R."/>
            <person name="Thompson L.S."/>
            <person name="Watkins K.L."/>
            <person name="Yang Q."/>
            <person name="Yu C."/>
            <person name="Zafar N."/>
            <person name="Zhou L."/>
            <person name="Kuske C.R."/>
        </authorList>
    </citation>
    <scope>NUCLEOTIDE SEQUENCE [LARGE SCALE GENOMIC DNA]</scope>
    <source>
        <strain>Ellin6076</strain>
    </source>
</reference>
<sequence length="210" mass="22381">MSPGILGKKIGMTQIFRPDGQVVPVTLLKAGPCMVVQRKTPSTDGYDAVQLGLVEFIKPQRINKPTAGRLKKAGVEGAKFMREFTLGPGSDDLKTGDQVLVDQFKPKDKVDVVGISKGKGFAGVVKRHHFRGGEGSHGSMFHRAPGSIGASSFPSRVVPGMRMGGHLGNAQVTVRNLEVIDVDTEDNVLVVKGAVPGPNGGYVLVRRSKR</sequence>
<accession>Q01W92</accession>
<name>RL3_SOLUE</name>
<keyword id="KW-0687">Ribonucleoprotein</keyword>
<keyword id="KW-0689">Ribosomal protein</keyword>
<keyword id="KW-0694">RNA-binding</keyword>
<keyword id="KW-0699">rRNA-binding</keyword>
<dbReference type="EMBL" id="CP000473">
    <property type="protein sequence ID" value="ABJ86073.1"/>
    <property type="molecule type" value="Genomic_DNA"/>
</dbReference>
<dbReference type="SMR" id="Q01W92"/>
<dbReference type="FunCoup" id="Q01W92">
    <property type="interactions" value="749"/>
</dbReference>
<dbReference type="STRING" id="234267.Acid_5118"/>
<dbReference type="KEGG" id="sus:Acid_5118"/>
<dbReference type="eggNOG" id="COG0087">
    <property type="taxonomic scope" value="Bacteria"/>
</dbReference>
<dbReference type="HOGENOM" id="CLU_044142_4_1_0"/>
<dbReference type="InParanoid" id="Q01W92"/>
<dbReference type="OrthoDB" id="9806135at2"/>
<dbReference type="GO" id="GO:0022625">
    <property type="term" value="C:cytosolic large ribosomal subunit"/>
    <property type="evidence" value="ECO:0007669"/>
    <property type="project" value="TreeGrafter"/>
</dbReference>
<dbReference type="GO" id="GO:0019843">
    <property type="term" value="F:rRNA binding"/>
    <property type="evidence" value="ECO:0007669"/>
    <property type="project" value="UniProtKB-UniRule"/>
</dbReference>
<dbReference type="GO" id="GO:0003735">
    <property type="term" value="F:structural constituent of ribosome"/>
    <property type="evidence" value="ECO:0007669"/>
    <property type="project" value="InterPro"/>
</dbReference>
<dbReference type="GO" id="GO:0006412">
    <property type="term" value="P:translation"/>
    <property type="evidence" value="ECO:0007669"/>
    <property type="project" value="UniProtKB-UniRule"/>
</dbReference>
<dbReference type="FunFam" id="2.40.30.10:FF:000004">
    <property type="entry name" value="50S ribosomal protein L3"/>
    <property type="match status" value="1"/>
</dbReference>
<dbReference type="Gene3D" id="3.30.160.810">
    <property type="match status" value="1"/>
</dbReference>
<dbReference type="Gene3D" id="2.40.30.10">
    <property type="entry name" value="Translation factors"/>
    <property type="match status" value="1"/>
</dbReference>
<dbReference type="HAMAP" id="MF_01325_B">
    <property type="entry name" value="Ribosomal_uL3_B"/>
    <property type="match status" value="1"/>
</dbReference>
<dbReference type="InterPro" id="IPR000597">
    <property type="entry name" value="Ribosomal_uL3"/>
</dbReference>
<dbReference type="InterPro" id="IPR019927">
    <property type="entry name" value="Ribosomal_uL3_bac/org-type"/>
</dbReference>
<dbReference type="InterPro" id="IPR019926">
    <property type="entry name" value="Ribosomal_uL3_CS"/>
</dbReference>
<dbReference type="InterPro" id="IPR009000">
    <property type="entry name" value="Transl_B-barrel_sf"/>
</dbReference>
<dbReference type="NCBIfam" id="TIGR03625">
    <property type="entry name" value="L3_bact"/>
    <property type="match status" value="1"/>
</dbReference>
<dbReference type="PANTHER" id="PTHR11229">
    <property type="entry name" value="50S RIBOSOMAL PROTEIN L3"/>
    <property type="match status" value="1"/>
</dbReference>
<dbReference type="PANTHER" id="PTHR11229:SF16">
    <property type="entry name" value="LARGE RIBOSOMAL SUBUNIT PROTEIN UL3C"/>
    <property type="match status" value="1"/>
</dbReference>
<dbReference type="Pfam" id="PF00297">
    <property type="entry name" value="Ribosomal_L3"/>
    <property type="match status" value="1"/>
</dbReference>
<dbReference type="SUPFAM" id="SSF50447">
    <property type="entry name" value="Translation proteins"/>
    <property type="match status" value="1"/>
</dbReference>
<dbReference type="PROSITE" id="PS00474">
    <property type="entry name" value="RIBOSOMAL_L3"/>
    <property type="match status" value="1"/>
</dbReference>
<feature type="chain" id="PRO_1000052146" description="Large ribosomal subunit protein uL3">
    <location>
        <begin position="1"/>
        <end position="210"/>
    </location>
</feature>
<organism>
    <name type="scientific">Solibacter usitatus (strain Ellin6076)</name>
    <dbReference type="NCBI Taxonomy" id="234267"/>
    <lineage>
        <taxon>Bacteria</taxon>
        <taxon>Pseudomonadati</taxon>
        <taxon>Acidobacteriota</taxon>
        <taxon>Terriglobia</taxon>
        <taxon>Bryobacterales</taxon>
        <taxon>Solibacteraceae</taxon>
        <taxon>Candidatus Solibacter</taxon>
    </lineage>
</organism>
<protein>
    <recommendedName>
        <fullName evidence="1">Large ribosomal subunit protein uL3</fullName>
    </recommendedName>
    <alternativeName>
        <fullName evidence="2">50S ribosomal protein L3</fullName>
    </alternativeName>
</protein>